<proteinExistence type="evidence at transcript level"/>
<sequence>MARFTNCLLKNIFTRSQFDSAKRRQCLQYLNALRSLQHNGYKTVYFGETEIPETLVTGEDFSDSYYIHTPSWCILHAGGSQGWVPWKYRMFLRNDLCIKKEDSLFLEFCDVVKRAYGKCAIVVKGRRQQDEMKPKTDKEGEAKAYVPTSINLTSIACSPGVAKSYGHELISLPPYYNYLNPLDSAWSSMKWFIINNRKEFCLQSVDNVYTYRYILFSDLISKGIEKVNLTKWKAITNKVRRWENYYLAKFS</sequence>
<accession>Q8CDS7</accession>
<dbReference type="EMBL" id="AK029653">
    <property type="protein sequence ID" value="BAC26550.1"/>
    <property type="molecule type" value="mRNA"/>
</dbReference>
<dbReference type="EMBL" id="AC162305">
    <property type="status" value="NOT_ANNOTATED_CDS"/>
    <property type="molecule type" value="Genomic_DNA"/>
</dbReference>
<dbReference type="EMBL" id="CH466602">
    <property type="protein sequence ID" value="EDL03788.1"/>
    <property type="molecule type" value="Genomic_DNA"/>
</dbReference>
<dbReference type="EMBL" id="BC147584">
    <property type="protein sequence ID" value="AAI47585.1"/>
    <property type="molecule type" value="mRNA"/>
</dbReference>
<dbReference type="EMBL" id="BC147622">
    <property type="protein sequence ID" value="AAI47623.1"/>
    <property type="molecule type" value="mRNA"/>
</dbReference>
<dbReference type="CCDS" id="CCDS28335.1"/>
<dbReference type="RefSeq" id="NP_083528.1">
    <property type="nucleotide sequence ID" value="NM_029252.2"/>
</dbReference>
<dbReference type="BioGRID" id="217399">
    <property type="interactions" value="2"/>
</dbReference>
<dbReference type="STRING" id="10090.ENSMUSP00000049694"/>
<dbReference type="PaxDb" id="10090-ENSMUSP00000049694"/>
<dbReference type="DNASU" id="75328"/>
<dbReference type="Ensembl" id="ENSMUST00000062638.8">
    <property type="protein sequence ID" value="ENSMUSP00000049694.6"/>
    <property type="gene ID" value="ENSMUSG00000051728.8"/>
</dbReference>
<dbReference type="GeneID" id="75328"/>
<dbReference type="KEGG" id="mmu:75328"/>
<dbReference type="UCSC" id="uc007zyz.1">
    <property type="organism name" value="mouse"/>
</dbReference>
<dbReference type="AGR" id="MGI:1922578"/>
<dbReference type="CTD" id="75328"/>
<dbReference type="MGI" id="MGI:1922578">
    <property type="gene designation" value="Fam243"/>
</dbReference>
<dbReference type="VEuPathDB" id="HostDB:ENSMUSG00000051728"/>
<dbReference type="eggNOG" id="ENOG502RXAQ">
    <property type="taxonomic scope" value="Eukaryota"/>
</dbReference>
<dbReference type="GeneTree" id="ENSGT00390000010669"/>
<dbReference type="HOGENOM" id="CLU_1106831_0_0_1"/>
<dbReference type="InParanoid" id="Q8CDS7"/>
<dbReference type="OMA" id="CIVHAGG"/>
<dbReference type="OrthoDB" id="2266637at2759"/>
<dbReference type="PhylomeDB" id="Q8CDS7"/>
<dbReference type="TreeFam" id="TF335469"/>
<dbReference type="BioGRID-ORCS" id="75328">
    <property type="hits" value="3 hits in 77 CRISPR screens"/>
</dbReference>
<dbReference type="PRO" id="PR:Q8CDS7"/>
<dbReference type="Proteomes" id="UP000000589">
    <property type="component" value="Chromosome 16"/>
</dbReference>
<dbReference type="RNAct" id="Q8CDS7">
    <property type="molecule type" value="protein"/>
</dbReference>
<dbReference type="Bgee" id="ENSMUSG00000051728">
    <property type="expression patterns" value="Expressed in seminiferous tubule of testis and 11 other cell types or tissues"/>
</dbReference>
<dbReference type="InterPro" id="IPR037728">
    <property type="entry name" value="C21orf140-like"/>
</dbReference>
<dbReference type="PANTHER" id="PTHR35969:SF1">
    <property type="entry name" value="FAMILY WITH SEQUENCE SIMILARITY 243 MEMBER A"/>
    <property type="match status" value="1"/>
</dbReference>
<dbReference type="PANTHER" id="PTHR35969">
    <property type="entry name" value="PROTEIN FAM243A-RELATED"/>
    <property type="match status" value="1"/>
</dbReference>
<comment type="similarity">
    <text evidence="2">Belongs to the FAM243 family.</text>
</comment>
<organism>
    <name type="scientific">Mus musculus</name>
    <name type="common">Mouse</name>
    <dbReference type="NCBI Taxonomy" id="10090"/>
    <lineage>
        <taxon>Eukaryota</taxon>
        <taxon>Metazoa</taxon>
        <taxon>Chordata</taxon>
        <taxon>Craniata</taxon>
        <taxon>Vertebrata</taxon>
        <taxon>Euteleostomi</taxon>
        <taxon>Mammalia</taxon>
        <taxon>Eutheria</taxon>
        <taxon>Euarchontoglires</taxon>
        <taxon>Glires</taxon>
        <taxon>Rodentia</taxon>
        <taxon>Myomorpha</taxon>
        <taxon>Muroidea</taxon>
        <taxon>Muridae</taxon>
        <taxon>Murinae</taxon>
        <taxon>Mus</taxon>
        <taxon>Mus</taxon>
    </lineage>
</organism>
<reference key="1">
    <citation type="journal article" date="2005" name="Science">
        <title>The transcriptional landscape of the mammalian genome.</title>
        <authorList>
            <person name="Carninci P."/>
            <person name="Kasukawa T."/>
            <person name="Katayama S."/>
            <person name="Gough J."/>
            <person name="Frith M.C."/>
            <person name="Maeda N."/>
            <person name="Oyama R."/>
            <person name="Ravasi T."/>
            <person name="Lenhard B."/>
            <person name="Wells C."/>
            <person name="Kodzius R."/>
            <person name="Shimokawa K."/>
            <person name="Bajic V.B."/>
            <person name="Brenner S.E."/>
            <person name="Batalov S."/>
            <person name="Forrest A.R."/>
            <person name="Zavolan M."/>
            <person name="Davis M.J."/>
            <person name="Wilming L.G."/>
            <person name="Aidinis V."/>
            <person name="Allen J.E."/>
            <person name="Ambesi-Impiombato A."/>
            <person name="Apweiler R."/>
            <person name="Aturaliya R.N."/>
            <person name="Bailey T.L."/>
            <person name="Bansal M."/>
            <person name="Baxter L."/>
            <person name="Beisel K.W."/>
            <person name="Bersano T."/>
            <person name="Bono H."/>
            <person name="Chalk A.M."/>
            <person name="Chiu K.P."/>
            <person name="Choudhary V."/>
            <person name="Christoffels A."/>
            <person name="Clutterbuck D.R."/>
            <person name="Crowe M.L."/>
            <person name="Dalla E."/>
            <person name="Dalrymple B.P."/>
            <person name="de Bono B."/>
            <person name="Della Gatta G."/>
            <person name="di Bernardo D."/>
            <person name="Down T."/>
            <person name="Engstrom P."/>
            <person name="Fagiolini M."/>
            <person name="Faulkner G."/>
            <person name="Fletcher C.F."/>
            <person name="Fukushima T."/>
            <person name="Furuno M."/>
            <person name="Futaki S."/>
            <person name="Gariboldi M."/>
            <person name="Georgii-Hemming P."/>
            <person name="Gingeras T.R."/>
            <person name="Gojobori T."/>
            <person name="Green R.E."/>
            <person name="Gustincich S."/>
            <person name="Harbers M."/>
            <person name="Hayashi Y."/>
            <person name="Hensch T.K."/>
            <person name="Hirokawa N."/>
            <person name="Hill D."/>
            <person name="Huminiecki L."/>
            <person name="Iacono M."/>
            <person name="Ikeo K."/>
            <person name="Iwama A."/>
            <person name="Ishikawa T."/>
            <person name="Jakt M."/>
            <person name="Kanapin A."/>
            <person name="Katoh M."/>
            <person name="Kawasawa Y."/>
            <person name="Kelso J."/>
            <person name="Kitamura H."/>
            <person name="Kitano H."/>
            <person name="Kollias G."/>
            <person name="Krishnan S.P."/>
            <person name="Kruger A."/>
            <person name="Kummerfeld S.K."/>
            <person name="Kurochkin I.V."/>
            <person name="Lareau L.F."/>
            <person name="Lazarevic D."/>
            <person name="Lipovich L."/>
            <person name="Liu J."/>
            <person name="Liuni S."/>
            <person name="McWilliam S."/>
            <person name="Madan Babu M."/>
            <person name="Madera M."/>
            <person name="Marchionni L."/>
            <person name="Matsuda H."/>
            <person name="Matsuzawa S."/>
            <person name="Miki H."/>
            <person name="Mignone F."/>
            <person name="Miyake S."/>
            <person name="Morris K."/>
            <person name="Mottagui-Tabar S."/>
            <person name="Mulder N."/>
            <person name="Nakano N."/>
            <person name="Nakauchi H."/>
            <person name="Ng P."/>
            <person name="Nilsson R."/>
            <person name="Nishiguchi S."/>
            <person name="Nishikawa S."/>
            <person name="Nori F."/>
            <person name="Ohara O."/>
            <person name="Okazaki Y."/>
            <person name="Orlando V."/>
            <person name="Pang K.C."/>
            <person name="Pavan W.J."/>
            <person name="Pavesi G."/>
            <person name="Pesole G."/>
            <person name="Petrovsky N."/>
            <person name="Piazza S."/>
            <person name="Reed J."/>
            <person name="Reid J.F."/>
            <person name="Ring B.Z."/>
            <person name="Ringwald M."/>
            <person name="Rost B."/>
            <person name="Ruan Y."/>
            <person name="Salzberg S.L."/>
            <person name="Sandelin A."/>
            <person name="Schneider C."/>
            <person name="Schoenbach C."/>
            <person name="Sekiguchi K."/>
            <person name="Semple C.A."/>
            <person name="Seno S."/>
            <person name="Sessa L."/>
            <person name="Sheng Y."/>
            <person name="Shibata Y."/>
            <person name="Shimada H."/>
            <person name="Shimada K."/>
            <person name="Silva D."/>
            <person name="Sinclair B."/>
            <person name="Sperling S."/>
            <person name="Stupka E."/>
            <person name="Sugiura K."/>
            <person name="Sultana R."/>
            <person name="Takenaka Y."/>
            <person name="Taki K."/>
            <person name="Tammoja K."/>
            <person name="Tan S.L."/>
            <person name="Tang S."/>
            <person name="Taylor M.S."/>
            <person name="Tegner J."/>
            <person name="Teichmann S.A."/>
            <person name="Ueda H.R."/>
            <person name="van Nimwegen E."/>
            <person name="Verardo R."/>
            <person name="Wei C.L."/>
            <person name="Yagi K."/>
            <person name="Yamanishi H."/>
            <person name="Zabarovsky E."/>
            <person name="Zhu S."/>
            <person name="Zimmer A."/>
            <person name="Hide W."/>
            <person name="Bult C."/>
            <person name="Grimmond S.M."/>
            <person name="Teasdale R.D."/>
            <person name="Liu E.T."/>
            <person name="Brusic V."/>
            <person name="Quackenbush J."/>
            <person name="Wahlestedt C."/>
            <person name="Mattick J.S."/>
            <person name="Hume D.A."/>
            <person name="Kai C."/>
            <person name="Sasaki D."/>
            <person name="Tomaru Y."/>
            <person name="Fukuda S."/>
            <person name="Kanamori-Katayama M."/>
            <person name="Suzuki M."/>
            <person name="Aoki J."/>
            <person name="Arakawa T."/>
            <person name="Iida J."/>
            <person name="Imamura K."/>
            <person name="Itoh M."/>
            <person name="Kato T."/>
            <person name="Kawaji H."/>
            <person name="Kawagashira N."/>
            <person name="Kawashima T."/>
            <person name="Kojima M."/>
            <person name="Kondo S."/>
            <person name="Konno H."/>
            <person name="Nakano K."/>
            <person name="Ninomiya N."/>
            <person name="Nishio T."/>
            <person name="Okada M."/>
            <person name="Plessy C."/>
            <person name="Shibata K."/>
            <person name="Shiraki T."/>
            <person name="Suzuki S."/>
            <person name="Tagami M."/>
            <person name="Waki K."/>
            <person name="Watahiki A."/>
            <person name="Okamura-Oho Y."/>
            <person name="Suzuki H."/>
            <person name="Kawai J."/>
            <person name="Hayashizaki Y."/>
        </authorList>
    </citation>
    <scope>NUCLEOTIDE SEQUENCE [LARGE SCALE MRNA]</scope>
    <source>
        <strain>C57BL/6J</strain>
        <tissue>Testis</tissue>
    </source>
</reference>
<reference key="2">
    <citation type="journal article" date="2009" name="PLoS Biol.">
        <title>Lineage-specific biology revealed by a finished genome assembly of the mouse.</title>
        <authorList>
            <person name="Church D.M."/>
            <person name="Goodstadt L."/>
            <person name="Hillier L.W."/>
            <person name="Zody M.C."/>
            <person name="Goldstein S."/>
            <person name="She X."/>
            <person name="Bult C.J."/>
            <person name="Agarwala R."/>
            <person name="Cherry J.L."/>
            <person name="DiCuccio M."/>
            <person name="Hlavina W."/>
            <person name="Kapustin Y."/>
            <person name="Meric P."/>
            <person name="Maglott D."/>
            <person name="Birtle Z."/>
            <person name="Marques A.C."/>
            <person name="Graves T."/>
            <person name="Zhou S."/>
            <person name="Teague B."/>
            <person name="Potamousis K."/>
            <person name="Churas C."/>
            <person name="Place M."/>
            <person name="Herschleb J."/>
            <person name="Runnheim R."/>
            <person name="Forrest D."/>
            <person name="Amos-Landgraf J."/>
            <person name="Schwartz D.C."/>
            <person name="Cheng Z."/>
            <person name="Lindblad-Toh K."/>
            <person name="Eichler E.E."/>
            <person name="Ponting C.P."/>
        </authorList>
    </citation>
    <scope>NUCLEOTIDE SEQUENCE [LARGE SCALE GENOMIC DNA]</scope>
    <source>
        <strain>C57BL/6J</strain>
    </source>
</reference>
<reference key="3">
    <citation type="submission" date="2005-09" db="EMBL/GenBank/DDBJ databases">
        <authorList>
            <person name="Mural R.J."/>
            <person name="Adams M.D."/>
            <person name="Myers E.W."/>
            <person name="Smith H.O."/>
            <person name="Venter J.C."/>
        </authorList>
    </citation>
    <scope>NUCLEOTIDE SEQUENCE [LARGE SCALE GENOMIC DNA]</scope>
</reference>
<reference key="4">
    <citation type="journal article" date="2004" name="Genome Res.">
        <title>The status, quality, and expansion of the NIH full-length cDNA project: the Mammalian Gene Collection (MGC).</title>
        <authorList>
            <consortium name="The MGC Project Team"/>
        </authorList>
    </citation>
    <scope>NUCLEOTIDE SEQUENCE [LARGE SCALE MRNA]</scope>
    <source>
        <tissue>Testis</tissue>
    </source>
</reference>
<name>FA243_MOUSE</name>
<keyword id="KW-1185">Reference proteome</keyword>
<gene>
    <name evidence="3" type="primary">Fam243</name>
    <name evidence="1" type="synonym">Fam243a</name>
</gene>
<protein>
    <recommendedName>
        <fullName evidence="2">Uncharacterized protein C21orf140 homolog</fullName>
    </recommendedName>
    <alternativeName>
        <fullName evidence="2">Protein FAM243A</fullName>
    </alternativeName>
</protein>
<evidence type="ECO:0000250" key="1">
    <source>
        <dbReference type="UniProtKB" id="B9A014"/>
    </source>
</evidence>
<evidence type="ECO:0000305" key="2"/>
<evidence type="ECO:0000312" key="3">
    <source>
        <dbReference type="MGI" id="MGI:1922578"/>
    </source>
</evidence>
<feature type="chain" id="PRO_0000415167" description="Uncharacterized protein C21orf140 homolog">
    <location>
        <begin position="1"/>
        <end position="251"/>
    </location>
</feature>